<comment type="function">
    <text>Omega-conotoxins act at presynaptic membranes, they bind and block voltage-gated calcium channels (Cav). Specifically acts on L-type channels. It blocks molluscan dihydropyridine-sensitive calcium channels.</text>
</comment>
<comment type="subcellular location">
    <subcellularLocation>
        <location evidence="3">Secreted</location>
    </subcellularLocation>
</comment>
<comment type="tissue specificity">
    <text evidence="6">Expressed by the venom duct.</text>
</comment>
<comment type="domain">
    <text evidence="2">The presence of a 'disulfide through disulfide knot' structurally defines this protein as a knottin.</text>
</comment>
<comment type="domain">
    <text evidence="5">The cysteine framework is VI/VII (C-C-CC-C-C).</text>
</comment>
<comment type="mass spectrometry" mass="2832.23" method="Electrospray" evidence="3"/>
<comment type="similarity">
    <text evidence="5">Belongs to the conotoxin O1 superfamily.</text>
</comment>
<accession>P56714</accession>
<accession>Q9U652</accession>
<accession>Q9U653</accession>
<sequence length="77" mass="8545">MKLTCMMIVAVLFLTAWTFATADDSGNGLENLFPKAHHEMKNPEASKLNKRCKQADEPCDVFSLDCCTGICLGVCMW</sequence>
<feature type="signal peptide" evidence="1">
    <location>
        <begin position="1"/>
        <end position="22"/>
    </location>
</feature>
<feature type="propeptide" id="PRO_0000392706">
    <location>
        <begin position="23"/>
        <end position="49"/>
    </location>
</feature>
<feature type="peptide" id="PRO_0000044479" description="Omega-conotoxin TxVII">
    <location>
        <begin position="52"/>
        <end position="77"/>
    </location>
</feature>
<feature type="disulfide bond" evidence="2 7">
    <location>
        <begin position="52"/>
        <end position="67"/>
    </location>
</feature>
<feature type="disulfide bond" evidence="2 7">
    <location>
        <begin position="59"/>
        <end position="71"/>
    </location>
</feature>
<feature type="disulfide bond" evidence="2 7">
    <location>
        <begin position="66"/>
        <end position="75"/>
    </location>
</feature>
<feature type="sequence conflict" description="In Ref. 1; AAF07974." evidence="5" ref="1">
    <original>N</original>
    <variation>K</variation>
    <location>
        <position position="31"/>
    </location>
</feature>
<feature type="sequence conflict" description="In Ref. 1; AAF07974." evidence="5" ref="1">
    <original>PK</original>
    <variation>SN</variation>
    <location>
        <begin position="34"/>
        <end position="35"/>
    </location>
</feature>
<feature type="strand" evidence="8">
    <location>
        <begin position="61"/>
        <end position="63"/>
    </location>
</feature>
<feature type="strand" evidence="8">
    <location>
        <begin position="72"/>
        <end position="74"/>
    </location>
</feature>
<evidence type="ECO:0000255" key="1"/>
<evidence type="ECO:0000269" key="2">
    <source>
    </source>
</evidence>
<evidence type="ECO:0000269" key="3">
    <source>
    </source>
</evidence>
<evidence type="ECO:0000303" key="4">
    <source>
    </source>
</evidence>
<evidence type="ECO:0000305" key="5"/>
<evidence type="ECO:0000305" key="6">
    <source>
    </source>
</evidence>
<evidence type="ECO:0000312" key="7">
    <source>
        <dbReference type="PDB" id="1F3K"/>
    </source>
</evidence>
<evidence type="ECO:0007829" key="8">
    <source>
        <dbReference type="PDB" id="1F3K"/>
    </source>
</evidence>
<organism>
    <name type="scientific">Conus textile</name>
    <name type="common">Cloth-of-gold cone</name>
    <dbReference type="NCBI Taxonomy" id="6494"/>
    <lineage>
        <taxon>Eukaryota</taxon>
        <taxon>Metazoa</taxon>
        <taxon>Spiralia</taxon>
        <taxon>Lophotrochozoa</taxon>
        <taxon>Mollusca</taxon>
        <taxon>Gastropoda</taxon>
        <taxon>Caenogastropoda</taxon>
        <taxon>Neogastropoda</taxon>
        <taxon>Conoidea</taxon>
        <taxon>Conidae</taxon>
        <taxon>Conus</taxon>
        <taxon>Cylinder</taxon>
    </lineage>
</organism>
<keyword id="KW-0002">3D-structure</keyword>
<keyword id="KW-0108">Calcium channel impairing toxin</keyword>
<keyword id="KW-0165">Cleavage on pair of basic residues</keyword>
<keyword id="KW-0903">Direct protein sequencing</keyword>
<keyword id="KW-1015">Disulfide bond</keyword>
<keyword id="KW-0872">Ion channel impairing toxin</keyword>
<keyword id="KW-0960">Knottin</keyword>
<keyword id="KW-0528">Neurotoxin</keyword>
<keyword id="KW-0638">Presynaptic neurotoxin</keyword>
<keyword id="KW-0964">Secreted</keyword>
<keyword id="KW-0732">Signal</keyword>
<keyword id="KW-0800">Toxin</keyword>
<keyword id="KW-1218">Voltage-gated calcium channel impairing toxin</keyword>
<dbReference type="EMBL" id="AF193263">
    <property type="protein sequence ID" value="AAF07974.1"/>
    <property type="molecule type" value="mRNA"/>
</dbReference>
<dbReference type="EMBL" id="AF193264">
    <property type="protein sequence ID" value="AAF07975.1"/>
    <property type="molecule type" value="mRNA"/>
</dbReference>
<dbReference type="PDB" id="1F3K">
    <property type="method" value="NMR"/>
    <property type="chains" value="A=52-77"/>
</dbReference>
<dbReference type="PDBsum" id="1F3K"/>
<dbReference type="SMR" id="P56714"/>
<dbReference type="ConoServer" id="1603">
    <property type="toxin name" value="TxVII"/>
</dbReference>
<dbReference type="ConoServer" id="1096">
    <property type="toxin name" value="TxVII precursor"/>
</dbReference>
<dbReference type="ConoServer" id="1097">
    <property type="toxin name" value="TxVII precursor"/>
</dbReference>
<dbReference type="EvolutionaryTrace" id="P56714"/>
<dbReference type="GO" id="GO:0005576">
    <property type="term" value="C:extracellular region"/>
    <property type="evidence" value="ECO:0007669"/>
    <property type="project" value="UniProtKB-SubCell"/>
</dbReference>
<dbReference type="GO" id="GO:0044231">
    <property type="term" value="C:host cell presynaptic membrane"/>
    <property type="evidence" value="ECO:0007669"/>
    <property type="project" value="UniProtKB-KW"/>
</dbReference>
<dbReference type="GO" id="GO:0005246">
    <property type="term" value="F:calcium channel regulator activity"/>
    <property type="evidence" value="ECO:0007669"/>
    <property type="project" value="UniProtKB-KW"/>
</dbReference>
<dbReference type="GO" id="GO:0008200">
    <property type="term" value="F:ion channel inhibitor activity"/>
    <property type="evidence" value="ECO:0007669"/>
    <property type="project" value="InterPro"/>
</dbReference>
<dbReference type="GO" id="GO:0090729">
    <property type="term" value="F:toxin activity"/>
    <property type="evidence" value="ECO:0007669"/>
    <property type="project" value="UniProtKB-KW"/>
</dbReference>
<dbReference type="InterPro" id="IPR004214">
    <property type="entry name" value="Conotoxin"/>
</dbReference>
<dbReference type="InterPro" id="IPR012321">
    <property type="entry name" value="Conotoxin_omega-typ_CS"/>
</dbReference>
<dbReference type="Pfam" id="PF02950">
    <property type="entry name" value="Conotoxin"/>
    <property type="match status" value="1"/>
</dbReference>
<dbReference type="SUPFAM" id="SSF57059">
    <property type="entry name" value="omega toxin-like"/>
    <property type="match status" value="1"/>
</dbReference>
<dbReference type="PROSITE" id="PS60004">
    <property type="entry name" value="OMEGA_CONOTOXIN"/>
    <property type="match status" value="1"/>
</dbReference>
<name>O17_CONTE</name>
<proteinExistence type="evidence at protein level"/>
<protein>
    <recommendedName>
        <fullName evidence="4">Omega-conotoxin TxVII</fullName>
    </recommendedName>
</protein>
<reference key="1">
    <citation type="journal article" date="2001" name="Mol. Biol. Evol.">
        <title>Mechanisms for evolving hypervariability: the case of conopeptides.</title>
        <authorList>
            <person name="Conticello S.G."/>
            <person name="Gilad Y."/>
            <person name="Avidan N."/>
            <person name="Ben-Asher E."/>
            <person name="Levy Z."/>
            <person name="Fainzilber M."/>
        </authorList>
    </citation>
    <scope>NUCLEOTIDE SEQUENCE [MRNA]</scope>
</reference>
<reference key="2">
    <citation type="journal article" date="1996" name="Biochemistry">
        <title>A novel hydrophobic omega-conotoxin blocks molluscan dihydropyridine-sensitive calcium channels.</title>
        <authorList>
            <person name="Fainzilber M."/>
            <person name="Lodder J.C."/>
            <person name="van der Schors R.C."/>
            <person name="Li K.W."/>
            <person name="Yu Z."/>
            <person name="Burlingame A.L."/>
            <person name="Geraerts W.P.M."/>
            <person name="Kits K.S."/>
        </authorList>
    </citation>
    <scope>PROTEIN SEQUENCE OF 52-77</scope>
    <scope>MASS SPECTROMETRY</scope>
    <scope>SUBCELLULAR LOCATION</scope>
    <source>
        <tissue>Venom</tissue>
    </source>
</reference>
<reference key="3">
    <citation type="journal article" date="2000" name="Biochemistry">
        <title>Three-dimensional solution structure of omega-conotoxin TxVII, an L-type calcium channel blocker.</title>
        <authorList>
            <person name="Kobayashi K."/>
            <person name="Sasaki T."/>
            <person name="Sato K."/>
            <person name="Kohno T."/>
        </authorList>
    </citation>
    <scope>STRUCTURE BY NMR OF 52-77</scope>
    <scope>DISULFIDE BONDS</scope>
</reference>